<sequence length="398" mass="44372">MAANNYTKKAVHFGAGNIGRGFVACFLHNSGYEVIFADVNADLINALNASPSYKVIEVGSEGTEESTITNYRAINSRTNEEELIQEIATAEVVTCSVGPNILKFIAPVIAKGIDRRSEDLPPVAVIACENAIGATDTLAEYIKDPKNTPSHRLENYEKRARFANSAIDRIVPAQDADAGLDVKLEKFYEWVVDRTPFKDMSPPDIKGINWVDNLLPYIERKLYTVNTGHATAAYHGYIRRKSTVYDALQDKDIQEEVKKALENTSHLITQKHGIDEQAQHEYVEKIVRRISNPHLEDAVERVGRAPLRKLSRKERFIGPAAELAEHGKDCSALLDAAEMAFRFQNVEGDEESAELAKIMASNKPEDVVKQVCGLNEQEKLFPKVVEVVQRVQADLHDD</sequence>
<accession>Q7SA44</accession>
<evidence type="ECO:0000250" key="1"/>
<evidence type="ECO:0000305" key="2"/>
<protein>
    <recommendedName>
        <fullName>Mannitol-1-phosphate 5-dehydrogenase</fullName>
        <shortName>M1PDH</shortName>
        <shortName>MPD</shortName>
        <shortName>MPDH</shortName>
        <ecNumber>1.1.1.17</ecNumber>
    </recommendedName>
</protein>
<comment type="function">
    <text evidence="1">Catalyzes the NAD(H)-dependent interconversion of D-fructose 6-phosphate and D-mannitol 1-phosphate in the mannitol metabolic pathway.</text>
</comment>
<comment type="catalytic activity">
    <reaction>
        <text>D-mannitol 1-phosphate + NAD(+) = beta-D-fructose 6-phosphate + NADH + H(+)</text>
        <dbReference type="Rhea" id="RHEA:19661"/>
        <dbReference type="ChEBI" id="CHEBI:15378"/>
        <dbReference type="ChEBI" id="CHEBI:57540"/>
        <dbReference type="ChEBI" id="CHEBI:57634"/>
        <dbReference type="ChEBI" id="CHEBI:57945"/>
        <dbReference type="ChEBI" id="CHEBI:61381"/>
        <dbReference type="EC" id="1.1.1.17"/>
    </reaction>
</comment>
<comment type="subunit">
    <text evidence="1">Monomer.</text>
</comment>
<comment type="similarity">
    <text evidence="2">Belongs to the mannitol dehydrogenase family.</text>
</comment>
<reference key="1">
    <citation type="journal article" date="2003" name="Nature">
        <title>The genome sequence of the filamentous fungus Neurospora crassa.</title>
        <authorList>
            <person name="Galagan J.E."/>
            <person name="Calvo S.E."/>
            <person name="Borkovich K.A."/>
            <person name="Selker E.U."/>
            <person name="Read N.D."/>
            <person name="Jaffe D.B."/>
            <person name="FitzHugh W."/>
            <person name="Ma L.-J."/>
            <person name="Smirnov S."/>
            <person name="Purcell S."/>
            <person name="Rehman B."/>
            <person name="Elkins T."/>
            <person name="Engels R."/>
            <person name="Wang S."/>
            <person name="Nielsen C.B."/>
            <person name="Butler J."/>
            <person name="Endrizzi M."/>
            <person name="Qui D."/>
            <person name="Ianakiev P."/>
            <person name="Bell-Pedersen D."/>
            <person name="Nelson M.A."/>
            <person name="Werner-Washburne M."/>
            <person name="Selitrennikoff C.P."/>
            <person name="Kinsey J.A."/>
            <person name="Braun E.L."/>
            <person name="Zelter A."/>
            <person name="Schulte U."/>
            <person name="Kothe G.O."/>
            <person name="Jedd G."/>
            <person name="Mewes H.-W."/>
            <person name="Staben C."/>
            <person name="Marcotte E."/>
            <person name="Greenberg D."/>
            <person name="Roy A."/>
            <person name="Foley K."/>
            <person name="Naylor J."/>
            <person name="Stange-Thomann N."/>
            <person name="Barrett R."/>
            <person name="Gnerre S."/>
            <person name="Kamal M."/>
            <person name="Kamvysselis M."/>
            <person name="Mauceli E.W."/>
            <person name="Bielke C."/>
            <person name="Rudd S."/>
            <person name="Frishman D."/>
            <person name="Krystofova S."/>
            <person name="Rasmussen C."/>
            <person name="Metzenberg R.L."/>
            <person name="Perkins D.D."/>
            <person name="Kroken S."/>
            <person name="Cogoni C."/>
            <person name="Macino G."/>
            <person name="Catcheside D.E.A."/>
            <person name="Li W."/>
            <person name="Pratt R.J."/>
            <person name="Osmani S.A."/>
            <person name="DeSouza C.P.C."/>
            <person name="Glass N.L."/>
            <person name="Orbach M.J."/>
            <person name="Berglund J.A."/>
            <person name="Voelker R."/>
            <person name="Yarden O."/>
            <person name="Plamann M."/>
            <person name="Seiler S."/>
            <person name="Dunlap J.C."/>
            <person name="Radford A."/>
            <person name="Aramayo R."/>
            <person name="Natvig D.O."/>
            <person name="Alex L.A."/>
            <person name="Mannhaupt G."/>
            <person name="Ebbole D.J."/>
            <person name="Freitag M."/>
            <person name="Paulsen I."/>
            <person name="Sachs M.S."/>
            <person name="Lander E.S."/>
            <person name="Nusbaum C."/>
            <person name="Birren B.W."/>
        </authorList>
    </citation>
    <scope>NUCLEOTIDE SEQUENCE [LARGE SCALE GENOMIC DNA]</scope>
    <source>
        <strain>ATCC 24698 / 74-OR23-1A / CBS 708.71 / DSM 1257 / FGSC 987</strain>
    </source>
</reference>
<name>MTLD_NEUCR</name>
<keyword id="KW-0520">NAD</keyword>
<keyword id="KW-0560">Oxidoreductase</keyword>
<keyword id="KW-1185">Reference proteome</keyword>
<feature type="chain" id="PRO_0000371530" description="Mannitol-1-phosphate 5-dehydrogenase">
    <location>
        <begin position="1"/>
        <end position="398"/>
    </location>
</feature>
<feature type="active site" evidence="1">
    <location>
        <position position="221"/>
    </location>
</feature>
<feature type="binding site" evidence="1">
    <location>
        <begin position="10"/>
        <end position="21"/>
    </location>
    <ligand>
        <name>NAD(+)</name>
        <dbReference type="ChEBI" id="CHEBI:57540"/>
    </ligand>
</feature>
<gene>
    <name type="ORF">NCU07318</name>
</gene>
<proteinExistence type="inferred from homology"/>
<dbReference type="EC" id="1.1.1.17"/>
<dbReference type="EMBL" id="CM002239">
    <property type="protein sequence ID" value="EAA33240.1"/>
    <property type="molecule type" value="Genomic_DNA"/>
</dbReference>
<dbReference type="RefSeq" id="XP_962476.1">
    <property type="nucleotide sequence ID" value="XM_957383.3"/>
</dbReference>
<dbReference type="SMR" id="Q7SA44"/>
<dbReference type="FunCoup" id="Q7SA44">
    <property type="interactions" value="45"/>
</dbReference>
<dbReference type="STRING" id="367110.Q7SA44"/>
<dbReference type="PaxDb" id="5141-EFNCRP00000007185"/>
<dbReference type="EnsemblFungi" id="EAA33240">
    <property type="protein sequence ID" value="EAA33240"/>
    <property type="gene ID" value="NCU07318"/>
</dbReference>
<dbReference type="GeneID" id="3878624"/>
<dbReference type="KEGG" id="ncr:NCU07318"/>
<dbReference type="VEuPathDB" id="FungiDB:NCU07318"/>
<dbReference type="HOGENOM" id="CLU_036089_0_1_1"/>
<dbReference type="InParanoid" id="Q7SA44"/>
<dbReference type="OMA" id="APFIERK"/>
<dbReference type="OrthoDB" id="418169at2759"/>
<dbReference type="Proteomes" id="UP000001805">
    <property type="component" value="Chromosome 4, Linkage Group IV"/>
</dbReference>
<dbReference type="GO" id="GO:0005829">
    <property type="term" value="C:cytosol"/>
    <property type="evidence" value="ECO:0000318"/>
    <property type="project" value="GO_Central"/>
</dbReference>
<dbReference type="GO" id="GO:0008926">
    <property type="term" value="F:mannitol-1-phosphate 5-dehydrogenase activity"/>
    <property type="evidence" value="ECO:0000318"/>
    <property type="project" value="GO_Central"/>
</dbReference>
<dbReference type="GO" id="GO:0019592">
    <property type="term" value="P:mannitol catabolic process"/>
    <property type="evidence" value="ECO:0000318"/>
    <property type="project" value="GO_Central"/>
</dbReference>
<dbReference type="Gene3D" id="1.10.1040.10">
    <property type="entry name" value="N-(1-d-carboxylethyl)-l-norvaline Dehydrogenase, domain 2"/>
    <property type="match status" value="1"/>
</dbReference>
<dbReference type="Gene3D" id="3.40.50.720">
    <property type="entry name" value="NAD(P)-binding Rossmann-like Domain"/>
    <property type="match status" value="1"/>
</dbReference>
<dbReference type="HAMAP" id="MF_00196">
    <property type="entry name" value="Mannitol_dehydrog"/>
    <property type="match status" value="1"/>
</dbReference>
<dbReference type="InterPro" id="IPR008927">
    <property type="entry name" value="6-PGluconate_DH-like_C_sf"/>
</dbReference>
<dbReference type="InterPro" id="IPR013328">
    <property type="entry name" value="6PGD_dom2"/>
</dbReference>
<dbReference type="InterPro" id="IPR023028">
    <property type="entry name" value="Mannitol_1_phos_5_DH"/>
</dbReference>
<dbReference type="InterPro" id="IPR000669">
    <property type="entry name" value="Mannitol_DH"/>
</dbReference>
<dbReference type="InterPro" id="IPR013118">
    <property type="entry name" value="Mannitol_DH_C"/>
</dbReference>
<dbReference type="InterPro" id="IPR013131">
    <property type="entry name" value="Mannitol_DH_N"/>
</dbReference>
<dbReference type="InterPro" id="IPR036291">
    <property type="entry name" value="NAD(P)-bd_dom_sf"/>
</dbReference>
<dbReference type="NCBIfam" id="NF002652">
    <property type="entry name" value="PRK02318.2-5"/>
    <property type="match status" value="1"/>
</dbReference>
<dbReference type="PANTHER" id="PTHR30524:SF0">
    <property type="entry name" value="ALTRONATE OXIDOREDUCTASE-RELATED"/>
    <property type="match status" value="1"/>
</dbReference>
<dbReference type="PANTHER" id="PTHR30524">
    <property type="entry name" value="MANNITOL-1-PHOSPHATE 5-DEHYDROGENASE"/>
    <property type="match status" value="1"/>
</dbReference>
<dbReference type="Pfam" id="PF01232">
    <property type="entry name" value="Mannitol_dh"/>
    <property type="match status" value="1"/>
</dbReference>
<dbReference type="Pfam" id="PF08125">
    <property type="entry name" value="Mannitol_dh_C"/>
    <property type="match status" value="1"/>
</dbReference>
<dbReference type="PRINTS" id="PR00084">
    <property type="entry name" value="MTLDHDRGNASE"/>
</dbReference>
<dbReference type="SUPFAM" id="SSF48179">
    <property type="entry name" value="6-phosphogluconate dehydrogenase C-terminal domain-like"/>
    <property type="match status" value="1"/>
</dbReference>
<dbReference type="SUPFAM" id="SSF51735">
    <property type="entry name" value="NAD(P)-binding Rossmann-fold domains"/>
    <property type="match status" value="1"/>
</dbReference>
<organism>
    <name type="scientific">Neurospora crassa (strain ATCC 24698 / 74-OR23-1A / CBS 708.71 / DSM 1257 / FGSC 987)</name>
    <dbReference type="NCBI Taxonomy" id="367110"/>
    <lineage>
        <taxon>Eukaryota</taxon>
        <taxon>Fungi</taxon>
        <taxon>Dikarya</taxon>
        <taxon>Ascomycota</taxon>
        <taxon>Pezizomycotina</taxon>
        <taxon>Sordariomycetes</taxon>
        <taxon>Sordariomycetidae</taxon>
        <taxon>Sordariales</taxon>
        <taxon>Sordariaceae</taxon>
        <taxon>Neurospora</taxon>
    </lineage>
</organism>